<protein>
    <recommendedName>
        <fullName evidence="7">GRB2-related adapter protein</fullName>
    </recommendedName>
</protein>
<sequence>MESVALYSFQATESDELAFNKGDTLKILNMEDDQNWYKAELRGVEGFIPKNYIRVKPHPWYSGRISRQLAEEILMKRNHLGAFLIRESESSPGEFSVSVNYGDQVQHFKVLREASGKYFLWEEKFNSLNELVDFYRTTTIAKKRQIFLRDEEPLLKSPGACFAQAQFDFSAQDPSQLSFRRGDIIEVLERPDPHWWRGRSCGRVGFFPRSYVQPVHL</sequence>
<name>GRAP_HUMAN</name>
<evidence type="ECO:0000250" key="1">
    <source>
        <dbReference type="UniProtKB" id="Q08012"/>
    </source>
</evidence>
<evidence type="ECO:0000255" key="2">
    <source>
        <dbReference type="PROSITE-ProRule" id="PRU00191"/>
    </source>
</evidence>
<evidence type="ECO:0000255" key="3">
    <source>
        <dbReference type="PROSITE-ProRule" id="PRU00192"/>
    </source>
</evidence>
<evidence type="ECO:0000269" key="4">
    <source>
    </source>
</evidence>
<evidence type="ECO:0000269" key="5">
    <source>
    </source>
</evidence>
<evidence type="ECO:0000269" key="6">
    <source>
    </source>
</evidence>
<evidence type="ECO:0000305" key="7"/>
<evidence type="ECO:0000312" key="8">
    <source>
        <dbReference type="HGNC" id="HGNC:4562"/>
    </source>
</evidence>
<reference key="1">
    <citation type="journal article" date="1996" name="J. Biol. Chem.">
        <title>Grap is a novel SH3-SH2-SH3 adaptor protein that couples tyrosine kinases to the Ras pathway.</title>
        <authorList>
            <person name="Feng G.-S."/>
            <person name="Ouyang Y.-B."/>
            <person name="Hu D.-P."/>
            <person name="Shi Z.-Q."/>
            <person name="Gentz R."/>
            <person name="Ni J."/>
        </authorList>
    </citation>
    <scope>NUCLEOTIDE SEQUENCE [MRNA]</scope>
</reference>
<reference key="2">
    <citation type="submission" date="2004-10" db="EMBL/GenBank/DDBJ databases">
        <title>Cloning of human full-length CDSs in BD Creator(TM) system donor vector.</title>
        <authorList>
            <person name="Kalnine N."/>
            <person name="Chen X."/>
            <person name="Rolfs A."/>
            <person name="Halleck A."/>
            <person name="Hines L."/>
            <person name="Eisenstein S."/>
            <person name="Koundinya M."/>
            <person name="Raphael J."/>
            <person name="Moreira D."/>
            <person name="Kelley T."/>
            <person name="LaBaer J."/>
            <person name="Lin Y."/>
            <person name="Phelan M."/>
            <person name="Farmer A."/>
        </authorList>
    </citation>
    <scope>NUCLEOTIDE SEQUENCE [LARGE SCALE MRNA]</scope>
</reference>
<reference key="3">
    <citation type="submission" date="2004-06" db="EMBL/GenBank/DDBJ databases">
        <title>Cloning of human full open reading frames in Gateway(TM) system entry vector (pDONR201).</title>
        <authorList>
            <person name="Halleck A."/>
            <person name="Ebert L."/>
            <person name="Mkoundinya M."/>
            <person name="Schick M."/>
            <person name="Eisenstein S."/>
            <person name="Neubert P."/>
            <person name="Kstrang K."/>
            <person name="Schatten R."/>
            <person name="Shen B."/>
            <person name="Henze S."/>
            <person name="Mar W."/>
            <person name="Korn B."/>
            <person name="Zuo D."/>
            <person name="Hu Y."/>
            <person name="LaBaer J."/>
        </authorList>
    </citation>
    <scope>NUCLEOTIDE SEQUENCE [LARGE SCALE MRNA]</scope>
</reference>
<reference key="4">
    <citation type="journal article" date="2006" name="Nature">
        <title>DNA sequence of human chromosome 17 and analysis of rearrangement in the human lineage.</title>
        <authorList>
            <person name="Zody M.C."/>
            <person name="Garber M."/>
            <person name="Adams D.J."/>
            <person name="Sharpe T."/>
            <person name="Harrow J."/>
            <person name="Lupski J.R."/>
            <person name="Nicholson C."/>
            <person name="Searle S.M."/>
            <person name="Wilming L."/>
            <person name="Young S.K."/>
            <person name="Abouelleil A."/>
            <person name="Allen N.R."/>
            <person name="Bi W."/>
            <person name="Bloom T."/>
            <person name="Borowsky M.L."/>
            <person name="Bugalter B.E."/>
            <person name="Butler J."/>
            <person name="Chang J.L."/>
            <person name="Chen C.-K."/>
            <person name="Cook A."/>
            <person name="Corum B."/>
            <person name="Cuomo C.A."/>
            <person name="de Jong P.J."/>
            <person name="DeCaprio D."/>
            <person name="Dewar K."/>
            <person name="FitzGerald M."/>
            <person name="Gilbert J."/>
            <person name="Gibson R."/>
            <person name="Gnerre S."/>
            <person name="Goldstein S."/>
            <person name="Grafham D.V."/>
            <person name="Grocock R."/>
            <person name="Hafez N."/>
            <person name="Hagopian D.S."/>
            <person name="Hart E."/>
            <person name="Norman C.H."/>
            <person name="Humphray S."/>
            <person name="Jaffe D.B."/>
            <person name="Jones M."/>
            <person name="Kamal M."/>
            <person name="Khodiyar V.K."/>
            <person name="LaButti K."/>
            <person name="Laird G."/>
            <person name="Lehoczky J."/>
            <person name="Liu X."/>
            <person name="Lokyitsang T."/>
            <person name="Loveland J."/>
            <person name="Lui A."/>
            <person name="Macdonald P."/>
            <person name="Major J.E."/>
            <person name="Matthews L."/>
            <person name="Mauceli E."/>
            <person name="McCarroll S.A."/>
            <person name="Mihalev A.H."/>
            <person name="Mudge J."/>
            <person name="Nguyen C."/>
            <person name="Nicol R."/>
            <person name="O'Leary S.B."/>
            <person name="Osoegawa K."/>
            <person name="Schwartz D.C."/>
            <person name="Shaw-Smith C."/>
            <person name="Stankiewicz P."/>
            <person name="Steward C."/>
            <person name="Swarbreck D."/>
            <person name="Venkataraman V."/>
            <person name="Whittaker C.A."/>
            <person name="Yang X."/>
            <person name="Zimmer A.R."/>
            <person name="Bradley A."/>
            <person name="Hubbard T."/>
            <person name="Birren B.W."/>
            <person name="Rogers J."/>
            <person name="Lander E.S."/>
            <person name="Nusbaum C."/>
        </authorList>
    </citation>
    <scope>NUCLEOTIDE SEQUENCE [LARGE SCALE GENOMIC DNA]</scope>
</reference>
<reference key="5">
    <citation type="journal article" date="2004" name="Genome Res.">
        <title>The status, quality, and expansion of the NIH full-length cDNA project: the Mammalian Gene Collection (MGC).</title>
        <authorList>
            <consortium name="The MGC Project Team"/>
        </authorList>
    </citation>
    <scope>NUCLEOTIDE SEQUENCE [LARGE SCALE MRNA]</scope>
    <source>
        <tissue>Blood</tissue>
        <tissue>Brain</tissue>
    </source>
</reference>
<reference key="6">
    <citation type="journal article" date="1998" name="Cell">
        <title>LAT: the ZAP-70 tyrosine kinase substrate that links T cell receptor to cellular activation.</title>
        <authorList>
            <person name="Zhang W."/>
            <person name="Sloan-Lancaster J."/>
            <person name="Kitchen J."/>
            <person name="Trible R.P."/>
            <person name="Samelson L.E."/>
        </authorList>
    </citation>
    <scope>INTERACTION WITH LAT</scope>
</reference>
<reference key="7">
    <citation type="journal article" date="1998" name="Oncogene">
        <title>Stimulation through the T cell receptor leads to interactions between SHB and several signaling proteins.</title>
        <authorList>
            <person name="Welsh M."/>
            <person name="Songyang Z."/>
            <person name="Frantz J.D."/>
            <person name="Trueb T."/>
            <person name="Reedquist K.A."/>
            <person name="Karlsson T."/>
            <person name="Miyazaki M."/>
            <person name="Cantley L.C."/>
            <person name="Band H."/>
            <person name="Shoelson S.E."/>
        </authorList>
    </citation>
    <scope>INTERACTION WITH SHB</scope>
</reference>
<reference key="8">
    <citation type="journal article" date="2019" name="Proc. Natl. Acad. Sci. U.S.A.">
        <title>Dysfunction of GRAP, encoding the GRB2-related adaptor protein, is linked to sensorineural hearing loss.</title>
        <authorList>
            <person name="Li C."/>
            <person name="Bademci G."/>
            <person name="Subasioglu A."/>
            <person name="Diaz-Horta O."/>
            <person name="Zhu Y."/>
            <person name="Liu J."/>
            <person name="Mitchell T.G."/>
            <person name="Abad C."/>
            <person name="Seyhan S."/>
            <person name="Duman D."/>
            <person name="Cengiz F.B."/>
            <person name="Tokgoz-Yilmaz S."/>
            <person name="Blanton S.H."/>
            <person name="Farooq A."/>
            <person name="Walz K."/>
            <person name="Zhai R.G."/>
            <person name="Tekin M."/>
        </authorList>
    </citation>
    <scope>INVOLVEMENT IN DFNB114</scope>
    <scope>FUNCTION</scope>
    <scope>VARIANT DFNB114 LEU-104</scope>
</reference>
<keyword id="KW-0209">Deafness</keyword>
<keyword id="KW-0225">Disease variant</keyword>
<keyword id="KW-0472">Membrane</keyword>
<keyword id="KW-1010">Non-syndromic deafness</keyword>
<keyword id="KW-1267">Proteomics identification</keyword>
<keyword id="KW-1185">Reference proteome</keyword>
<keyword id="KW-0677">Repeat</keyword>
<keyword id="KW-0727">SH2 domain</keyword>
<keyword id="KW-0728">SH3 domain</keyword>
<keyword id="KW-0770">Synapse</keyword>
<accession>Q13588</accession>
<feature type="chain" id="PRO_0000088206" description="GRB2-related adapter protein">
    <location>
        <begin position="1"/>
        <end position="217"/>
    </location>
</feature>
<feature type="domain" description="SH3 1" evidence="3">
    <location>
        <begin position="1"/>
        <end position="58"/>
    </location>
</feature>
<feature type="domain" description="SH2" evidence="2">
    <location>
        <begin position="60"/>
        <end position="154"/>
    </location>
</feature>
<feature type="domain" description="SH3 2" evidence="3">
    <location>
        <begin position="158"/>
        <end position="217"/>
    </location>
</feature>
<feature type="sequence variant" id="VAR_082111" description="In DFNB114; dbSNP:rs370564476." evidence="4">
    <original>Q</original>
    <variation>L</variation>
    <location>
        <position position="104"/>
    </location>
</feature>
<organism>
    <name type="scientific">Homo sapiens</name>
    <name type="common">Human</name>
    <dbReference type="NCBI Taxonomy" id="9606"/>
    <lineage>
        <taxon>Eukaryota</taxon>
        <taxon>Metazoa</taxon>
        <taxon>Chordata</taxon>
        <taxon>Craniata</taxon>
        <taxon>Vertebrata</taxon>
        <taxon>Euteleostomi</taxon>
        <taxon>Mammalia</taxon>
        <taxon>Eutheria</taxon>
        <taxon>Euarchontoglires</taxon>
        <taxon>Primates</taxon>
        <taxon>Haplorrhini</taxon>
        <taxon>Catarrhini</taxon>
        <taxon>Hominidae</taxon>
        <taxon>Homo</taxon>
    </lineage>
</organism>
<gene>
    <name evidence="8" type="primary">GRAP</name>
</gene>
<proteinExistence type="evidence at protein level"/>
<dbReference type="EMBL" id="U52518">
    <property type="protein sequence ID" value="AAC50541.1"/>
    <property type="molecule type" value="mRNA"/>
</dbReference>
<dbReference type="EMBL" id="BT019981">
    <property type="protein sequence ID" value="AAV38784.1"/>
    <property type="molecule type" value="mRNA"/>
</dbReference>
<dbReference type="EMBL" id="CR541941">
    <property type="protein sequence ID" value="CAG46739.1"/>
    <property type="molecule type" value="mRNA"/>
</dbReference>
<dbReference type="EMBL" id="CR541966">
    <property type="protein sequence ID" value="CAG46764.1"/>
    <property type="molecule type" value="mRNA"/>
</dbReference>
<dbReference type="EMBL" id="AC003957">
    <property type="status" value="NOT_ANNOTATED_CDS"/>
    <property type="molecule type" value="Genomic_DNA"/>
</dbReference>
<dbReference type="EMBL" id="AC007952">
    <property type="status" value="NOT_ANNOTATED_CDS"/>
    <property type="molecule type" value="Genomic_DNA"/>
</dbReference>
<dbReference type="EMBL" id="BC035856">
    <property type="protein sequence ID" value="AAH35856.1"/>
    <property type="molecule type" value="mRNA"/>
</dbReference>
<dbReference type="EMBL" id="BC063035">
    <property type="protein sequence ID" value="AAH63035.1"/>
    <property type="molecule type" value="mRNA"/>
</dbReference>
<dbReference type="CCDS" id="CCDS11202.1"/>
<dbReference type="RefSeq" id="NP_001317077.1">
    <property type="nucleotide sequence ID" value="NM_001330148.1"/>
</dbReference>
<dbReference type="RefSeq" id="NP_006604.1">
    <property type="nucleotide sequence ID" value="NM_006613.4"/>
</dbReference>
<dbReference type="RefSeq" id="XP_016879518.1">
    <property type="nucleotide sequence ID" value="XM_017024029.1"/>
</dbReference>
<dbReference type="RefSeq" id="XP_047291110.1">
    <property type="nucleotide sequence ID" value="XM_047435154.1"/>
</dbReference>
<dbReference type="RefSeq" id="XP_054170721.1">
    <property type="nucleotide sequence ID" value="XM_054314746.1"/>
</dbReference>
<dbReference type="SMR" id="Q13588"/>
<dbReference type="BioGRID" id="115973">
    <property type="interactions" value="13"/>
</dbReference>
<dbReference type="FunCoup" id="Q13588">
    <property type="interactions" value="72"/>
</dbReference>
<dbReference type="IntAct" id="Q13588">
    <property type="interactions" value="12"/>
</dbReference>
<dbReference type="MINT" id="Q13588"/>
<dbReference type="STRING" id="9606.ENSP00000284154"/>
<dbReference type="iPTMnet" id="Q13588"/>
<dbReference type="PhosphoSitePlus" id="Q13588"/>
<dbReference type="BioMuta" id="GRAP"/>
<dbReference type="DMDM" id="3913785"/>
<dbReference type="MassIVE" id="Q13588"/>
<dbReference type="PaxDb" id="9606-ENSP00000284154"/>
<dbReference type="PeptideAtlas" id="Q13588"/>
<dbReference type="ProteomicsDB" id="59585"/>
<dbReference type="Antibodypedia" id="25855">
    <property type="antibodies" value="165 antibodies from 30 providers"/>
</dbReference>
<dbReference type="DNASU" id="10750"/>
<dbReference type="Ensembl" id="ENST00000284154.10">
    <property type="protein sequence ID" value="ENSP00000284154.5"/>
    <property type="gene ID" value="ENSG00000154016.14"/>
</dbReference>
<dbReference type="GeneID" id="10750"/>
<dbReference type="KEGG" id="hsa:10750"/>
<dbReference type="MANE-Select" id="ENST00000284154.10">
    <property type="protein sequence ID" value="ENSP00000284154.5"/>
    <property type="RefSeq nucleotide sequence ID" value="NM_006613.4"/>
    <property type="RefSeq protein sequence ID" value="NP_006604.1"/>
</dbReference>
<dbReference type="UCSC" id="uc002guy.4">
    <property type="organism name" value="human"/>
</dbReference>
<dbReference type="AGR" id="HGNC:4562"/>
<dbReference type="CTD" id="10750"/>
<dbReference type="DisGeNET" id="10750"/>
<dbReference type="GeneCards" id="GRAP"/>
<dbReference type="HGNC" id="HGNC:4562">
    <property type="gene designation" value="GRAP"/>
</dbReference>
<dbReference type="HPA" id="ENSG00000154016">
    <property type="expression patterns" value="Tissue enhanced (lymphoid)"/>
</dbReference>
<dbReference type="MalaCards" id="GRAP"/>
<dbReference type="MIM" id="604330">
    <property type="type" value="gene"/>
</dbReference>
<dbReference type="MIM" id="618456">
    <property type="type" value="phenotype"/>
</dbReference>
<dbReference type="neXtProt" id="NX_Q13588"/>
<dbReference type="OpenTargets" id="ENSG00000154016"/>
<dbReference type="Orphanet" id="90636">
    <property type="disease" value="Rare autosomal recessive non-syndromic sensorineural deafness type DFNB"/>
</dbReference>
<dbReference type="PharmGKB" id="PA28958"/>
<dbReference type="VEuPathDB" id="HostDB:ENSG00000154016"/>
<dbReference type="eggNOG" id="KOG3601">
    <property type="taxonomic scope" value="Eukaryota"/>
</dbReference>
<dbReference type="GeneTree" id="ENSGT00940000156254"/>
<dbReference type="HOGENOM" id="CLU_073617_1_0_1"/>
<dbReference type="InParanoid" id="Q13588"/>
<dbReference type="OMA" id="NKGDMLK"/>
<dbReference type="OrthoDB" id="10255964at2759"/>
<dbReference type="PAN-GO" id="Q13588">
    <property type="GO annotations" value="8 GO annotations based on evolutionary models"/>
</dbReference>
<dbReference type="PhylomeDB" id="Q13588"/>
<dbReference type="TreeFam" id="TF354288"/>
<dbReference type="PathwayCommons" id="Q13588"/>
<dbReference type="Reactome" id="R-HSA-1433557">
    <property type="pathway name" value="Signaling by SCF-KIT"/>
</dbReference>
<dbReference type="SignaLink" id="Q13588"/>
<dbReference type="SIGNOR" id="Q13588"/>
<dbReference type="BioGRID-ORCS" id="10750">
    <property type="hits" value="62 hits in 1141 CRISPR screens"/>
</dbReference>
<dbReference type="ChiTaRS" id="GRAP">
    <property type="organism name" value="human"/>
</dbReference>
<dbReference type="GeneWiki" id="GRAP"/>
<dbReference type="GenomeRNAi" id="10750"/>
<dbReference type="Pharos" id="Q13588">
    <property type="development level" value="Tbio"/>
</dbReference>
<dbReference type="PRO" id="PR:Q13588"/>
<dbReference type="Proteomes" id="UP000005640">
    <property type="component" value="Chromosome 17"/>
</dbReference>
<dbReference type="RNAct" id="Q13588">
    <property type="molecule type" value="protein"/>
</dbReference>
<dbReference type="Bgee" id="ENSG00000154016">
    <property type="expression patterns" value="Expressed in spleen and 101 other cell types or tissues"/>
</dbReference>
<dbReference type="ExpressionAtlas" id="Q13588">
    <property type="expression patterns" value="baseline and differential"/>
</dbReference>
<dbReference type="GO" id="GO:0008180">
    <property type="term" value="C:COP9 signalosome"/>
    <property type="evidence" value="ECO:0000318"/>
    <property type="project" value="GO_Central"/>
</dbReference>
<dbReference type="GO" id="GO:0005737">
    <property type="term" value="C:cytoplasm"/>
    <property type="evidence" value="ECO:0000318"/>
    <property type="project" value="GO_Central"/>
</dbReference>
<dbReference type="GO" id="GO:0005829">
    <property type="term" value="C:cytosol"/>
    <property type="evidence" value="ECO:0000304"/>
    <property type="project" value="Reactome"/>
</dbReference>
<dbReference type="GO" id="GO:0005654">
    <property type="term" value="C:nucleoplasm"/>
    <property type="evidence" value="ECO:0000318"/>
    <property type="project" value="GO_Central"/>
</dbReference>
<dbReference type="GO" id="GO:0005886">
    <property type="term" value="C:plasma membrane"/>
    <property type="evidence" value="ECO:0000318"/>
    <property type="project" value="GO_Central"/>
</dbReference>
<dbReference type="GO" id="GO:0098793">
    <property type="term" value="C:presynapse"/>
    <property type="evidence" value="ECO:0000250"/>
    <property type="project" value="UniProtKB"/>
</dbReference>
<dbReference type="GO" id="GO:0005154">
    <property type="term" value="F:epidermal growth factor receptor binding"/>
    <property type="evidence" value="ECO:0000318"/>
    <property type="project" value="GO_Central"/>
</dbReference>
<dbReference type="GO" id="GO:0001784">
    <property type="term" value="F:phosphotyrosine residue binding"/>
    <property type="evidence" value="ECO:0000318"/>
    <property type="project" value="GO_Central"/>
</dbReference>
<dbReference type="GO" id="GO:0007267">
    <property type="term" value="P:cell-cell signaling"/>
    <property type="evidence" value="ECO:0000304"/>
    <property type="project" value="ProtInc"/>
</dbReference>
<dbReference type="GO" id="GO:0007265">
    <property type="term" value="P:Ras protein signal transduction"/>
    <property type="evidence" value="ECO:0000304"/>
    <property type="project" value="ProtInc"/>
</dbReference>
<dbReference type="GO" id="GO:0043408">
    <property type="term" value="P:regulation of MAPK cascade"/>
    <property type="evidence" value="ECO:0000318"/>
    <property type="project" value="GO_Central"/>
</dbReference>
<dbReference type="GO" id="GO:0007605">
    <property type="term" value="P:sensory perception of sound"/>
    <property type="evidence" value="ECO:0000314"/>
    <property type="project" value="UniProtKB"/>
</dbReference>
<dbReference type="GO" id="GO:0007165">
    <property type="term" value="P:signal transduction"/>
    <property type="evidence" value="ECO:0000318"/>
    <property type="project" value="GO_Central"/>
</dbReference>
<dbReference type="CDD" id="cd09941">
    <property type="entry name" value="SH2_Grb2_like"/>
    <property type="match status" value="1"/>
</dbReference>
<dbReference type="CDD" id="cd11951">
    <property type="entry name" value="SH3_GRAP_C"/>
    <property type="match status" value="1"/>
</dbReference>
<dbReference type="CDD" id="cd11948">
    <property type="entry name" value="SH3_GRAP_N"/>
    <property type="match status" value="1"/>
</dbReference>
<dbReference type="FunFam" id="2.30.30.40:FF:000076">
    <property type="entry name" value="Growth factor receptor-bound protein 2"/>
    <property type="match status" value="1"/>
</dbReference>
<dbReference type="FunFam" id="3.30.505.10:FF:000022">
    <property type="entry name" value="Growth factor receptor-bound protein 2"/>
    <property type="match status" value="1"/>
</dbReference>
<dbReference type="Gene3D" id="3.30.505.10">
    <property type="entry name" value="SH2 domain"/>
    <property type="match status" value="1"/>
</dbReference>
<dbReference type="Gene3D" id="2.30.30.40">
    <property type="entry name" value="SH3 Domains"/>
    <property type="match status" value="2"/>
</dbReference>
<dbReference type="InterPro" id="IPR035645">
    <property type="entry name" value="GRAP_N_SH3"/>
</dbReference>
<dbReference type="InterPro" id="IPR043539">
    <property type="entry name" value="Grb2-like"/>
</dbReference>
<dbReference type="InterPro" id="IPR000980">
    <property type="entry name" value="SH2"/>
</dbReference>
<dbReference type="InterPro" id="IPR036860">
    <property type="entry name" value="SH2_dom_sf"/>
</dbReference>
<dbReference type="InterPro" id="IPR036028">
    <property type="entry name" value="SH3-like_dom_sf"/>
</dbReference>
<dbReference type="InterPro" id="IPR001452">
    <property type="entry name" value="SH3_domain"/>
</dbReference>
<dbReference type="PANTHER" id="PTHR46037">
    <property type="entry name" value="PROTEIN ENHANCER OF SEVENLESS 2B"/>
    <property type="match status" value="1"/>
</dbReference>
<dbReference type="Pfam" id="PF00017">
    <property type="entry name" value="SH2"/>
    <property type="match status" value="1"/>
</dbReference>
<dbReference type="Pfam" id="PF00018">
    <property type="entry name" value="SH3_1"/>
    <property type="match status" value="2"/>
</dbReference>
<dbReference type="PRINTS" id="PR00499">
    <property type="entry name" value="P67PHOX"/>
</dbReference>
<dbReference type="PRINTS" id="PR00401">
    <property type="entry name" value="SH2DOMAIN"/>
</dbReference>
<dbReference type="PRINTS" id="PR00452">
    <property type="entry name" value="SH3DOMAIN"/>
</dbReference>
<dbReference type="SMART" id="SM00252">
    <property type="entry name" value="SH2"/>
    <property type="match status" value="1"/>
</dbReference>
<dbReference type="SMART" id="SM00326">
    <property type="entry name" value="SH3"/>
    <property type="match status" value="2"/>
</dbReference>
<dbReference type="SUPFAM" id="SSF55550">
    <property type="entry name" value="SH2 domain"/>
    <property type="match status" value="1"/>
</dbReference>
<dbReference type="SUPFAM" id="SSF50044">
    <property type="entry name" value="SH3-domain"/>
    <property type="match status" value="2"/>
</dbReference>
<dbReference type="PROSITE" id="PS50001">
    <property type="entry name" value="SH2"/>
    <property type="match status" value="1"/>
</dbReference>
<dbReference type="PROSITE" id="PS50002">
    <property type="entry name" value="SH3"/>
    <property type="match status" value="2"/>
</dbReference>
<comment type="function">
    <text evidence="4">Couples signals from receptor and cytoplasmic tyrosine kinases to the Ras signaling pathway. Plays a role in the inner ear and in hearing (PubMed:30610177).</text>
</comment>
<comment type="subunit">
    <text evidence="5 6">Associates through its SH2 domain with ligand-activated receptors for stem cell factor (KIT) and erythropoietin (EPOR). Also forms a stable complex with the Bcr-Abl oncoprotein. GRAP is associated with the Ras guanine nucleotide exchange factor SOS1, primarily through its N-terminal SH3 domain. Interacts with phosphorylated LAT upon TCR activation. Interacts with SHB.</text>
</comment>
<comment type="interaction">
    <interactant intactId="EBI-2847510">
        <id>Q13588</id>
    </interactant>
    <interactant intactId="EBI-1536151">
        <id>O14672</id>
        <label>ADAM10</label>
    </interactant>
    <organismsDiffer>false</organismsDiffer>
    <experiments>2</experiments>
</comment>
<comment type="interaction">
    <interactant intactId="EBI-2847510">
        <id>Q13588</id>
    </interactant>
    <interactant intactId="EBI-10968534">
        <id>P50570-2</id>
        <label>DNM2</label>
    </interactant>
    <organismsDiffer>false</organismsDiffer>
    <experiments>3</experiments>
</comment>
<comment type="interaction">
    <interactant intactId="EBI-2847510">
        <id>Q13588</id>
    </interactant>
    <interactant intactId="EBI-710457">
        <id>Q7L190</id>
        <label>DPPA4</label>
    </interactant>
    <organismsDiffer>false</organismsDiffer>
    <experiments>3</experiments>
</comment>
<comment type="interaction">
    <interactant intactId="EBI-2847510">
        <id>Q13588</id>
    </interactant>
    <interactant intactId="EBI-466029">
        <id>P42858</id>
        <label>HTT</label>
    </interactant>
    <organismsDiffer>false</organismsDiffer>
    <experiments>12</experiments>
</comment>
<comment type="interaction">
    <interactant intactId="EBI-2847510">
        <id>Q13588</id>
    </interactant>
    <interactant intactId="EBI-740322">
        <id>Q93062</id>
        <label>RBPMS</label>
    </interactant>
    <organismsDiffer>false</organismsDiffer>
    <experiments>3</experiments>
</comment>
<comment type="interaction">
    <interactant intactId="EBI-2847510">
        <id>Q13588</id>
    </interactant>
    <interactant intactId="EBI-10829018">
        <id>Q04864-2</id>
        <label>REL</label>
    </interactant>
    <organismsDiffer>false</organismsDiffer>
    <experiments>3</experiments>
</comment>
<comment type="interaction">
    <interactant intactId="EBI-2847510">
        <id>Q13588</id>
    </interactant>
    <interactant intactId="EBI-9088321">
        <id>O94900</id>
        <label>TOX</label>
    </interactant>
    <organismsDiffer>false</organismsDiffer>
    <experiments>3</experiments>
</comment>
<comment type="interaction">
    <interactant intactId="EBI-2847510">
        <id>Q13588</id>
    </interactant>
    <interactant intactId="EBI-81290">
        <id>P19474</id>
        <label>TRIM21</label>
    </interactant>
    <organismsDiffer>false</organismsDiffer>
    <experiments>8</experiments>
</comment>
<comment type="subcellular location">
    <subcellularLocation>
        <location evidence="1">Membrane</location>
        <topology evidence="1">Peripheral membrane protein</topology>
    </subcellularLocation>
    <subcellularLocation>
        <location evidence="1">Synapse</location>
    </subcellularLocation>
    <text evidence="1">Localizes at the presynaptic terminal.</text>
</comment>
<comment type="disease" evidence="4">
    <disease id="DI-05583">
        <name>Deafness, autosomal recessive, 114</name>
        <acronym>DFNB114</acronym>
        <description>A form of non-syndromic deafness characterized by congenital profound sensorineural hearing loss. Sensorineural deafness results from damage to the neural receptors of the inner ear, the nerve pathways to the brain, or the area of the brain that receives sound information.</description>
        <dbReference type="MIM" id="618456"/>
    </disease>
    <text>The disease is caused by variants affecting the gene represented in this entry.</text>
</comment>
<comment type="similarity">
    <text evidence="7">Belongs to the GRB2/sem-5/DRK family.</text>
</comment>